<reference key="1">
    <citation type="journal article" date="2002" name="J. Bacteriol.">
        <title>Whole-genome comparison of Mycobacterium tuberculosis clinical and laboratory strains.</title>
        <authorList>
            <person name="Fleischmann R.D."/>
            <person name="Alland D."/>
            <person name="Eisen J.A."/>
            <person name="Carpenter L."/>
            <person name="White O."/>
            <person name="Peterson J.D."/>
            <person name="DeBoy R.T."/>
            <person name="Dodson R.J."/>
            <person name="Gwinn M.L."/>
            <person name="Haft D.H."/>
            <person name="Hickey E.K."/>
            <person name="Kolonay J.F."/>
            <person name="Nelson W.C."/>
            <person name="Umayam L.A."/>
            <person name="Ermolaeva M.D."/>
            <person name="Salzberg S.L."/>
            <person name="Delcher A."/>
            <person name="Utterback T.R."/>
            <person name="Weidman J.F."/>
            <person name="Khouri H.M."/>
            <person name="Gill J."/>
            <person name="Mikula A."/>
            <person name="Bishai W."/>
            <person name="Jacobs W.R. Jr."/>
            <person name="Venter J.C."/>
            <person name="Fraser C.M."/>
        </authorList>
    </citation>
    <scope>NUCLEOTIDE SEQUENCE [LARGE SCALE GENOMIC DNA]</scope>
    <source>
        <strain>CDC 1551 / Oshkosh</strain>
    </source>
</reference>
<accession>P9WGQ2</accession>
<accession>L0T923</accession>
<accession>O53927</accession>
<accession>Q7D837</accession>
<sequence>MEEMALAQQVPNLGLARFSVQDKSILITGATGSLGRVAARALADAGARLTLAGGNSAGLAELVNGAGIDDAAVVTCRPDSLADAQQMVEAALGRYGRLDGVLVASGSNHVAPITEMAVEDFDAVMDANVRGAWLVCRAAGRVLLEQGQGGSVVLVSSVRGGLGNAAGYSAYCPSKAGTDLLAKTLAAEWGGHGIRVNALAPTVFRSAVTEWMFTDDPKGRATREAMLARIPLRRFAEPEDFVGALIYLLSDASSFYTGQVMYLDGGYTAC</sequence>
<evidence type="ECO:0000250" key="1"/>
<evidence type="ECO:0000305" key="2"/>
<name>Y1714_MYCTO</name>
<organism>
    <name type="scientific">Mycobacterium tuberculosis (strain CDC 1551 / Oshkosh)</name>
    <dbReference type="NCBI Taxonomy" id="83331"/>
    <lineage>
        <taxon>Bacteria</taxon>
        <taxon>Bacillati</taxon>
        <taxon>Actinomycetota</taxon>
        <taxon>Actinomycetes</taxon>
        <taxon>Mycobacteriales</taxon>
        <taxon>Mycobacteriaceae</taxon>
        <taxon>Mycobacterium</taxon>
        <taxon>Mycobacterium tuberculosis complex</taxon>
    </lineage>
</organism>
<keyword id="KW-0560">Oxidoreductase</keyword>
<keyword id="KW-1185">Reference proteome</keyword>
<gene>
    <name type="ordered locus">MT1753.1</name>
</gene>
<dbReference type="EC" id="1.-.-.-"/>
<dbReference type="EMBL" id="AE000516">
    <property type="protein sequence ID" value="AAK46025.1"/>
    <property type="molecule type" value="Genomic_DNA"/>
</dbReference>
<dbReference type="PIR" id="B70817">
    <property type="entry name" value="B70817"/>
</dbReference>
<dbReference type="RefSeq" id="WP_003408444.1">
    <property type="nucleotide sequence ID" value="NZ_KK341227.1"/>
</dbReference>
<dbReference type="SMR" id="P9WGQ2"/>
<dbReference type="KEGG" id="mtc:MT1753.1"/>
<dbReference type="PATRIC" id="fig|83331.31.peg.1883"/>
<dbReference type="HOGENOM" id="CLU_010194_1_1_11"/>
<dbReference type="Proteomes" id="UP000001020">
    <property type="component" value="Chromosome"/>
</dbReference>
<dbReference type="GO" id="GO:0016616">
    <property type="term" value="F:oxidoreductase activity, acting on the CH-OH group of donors, NAD or NADP as acceptor"/>
    <property type="evidence" value="ECO:0007669"/>
    <property type="project" value="TreeGrafter"/>
</dbReference>
<dbReference type="CDD" id="cd05233">
    <property type="entry name" value="SDR_c"/>
    <property type="match status" value="1"/>
</dbReference>
<dbReference type="FunFam" id="3.40.50.720:FF:000084">
    <property type="entry name" value="Short-chain dehydrogenase reductase"/>
    <property type="match status" value="1"/>
</dbReference>
<dbReference type="Gene3D" id="3.40.50.720">
    <property type="entry name" value="NAD(P)-binding Rossmann-like Domain"/>
    <property type="match status" value="1"/>
</dbReference>
<dbReference type="InterPro" id="IPR036291">
    <property type="entry name" value="NAD(P)-bd_dom_sf"/>
</dbReference>
<dbReference type="InterPro" id="IPR002347">
    <property type="entry name" value="SDR_fam"/>
</dbReference>
<dbReference type="PANTHER" id="PTHR42760">
    <property type="entry name" value="SHORT-CHAIN DEHYDROGENASES/REDUCTASES FAMILY MEMBER"/>
    <property type="match status" value="1"/>
</dbReference>
<dbReference type="Pfam" id="PF13561">
    <property type="entry name" value="adh_short_C2"/>
    <property type="match status" value="1"/>
</dbReference>
<dbReference type="PRINTS" id="PR00081">
    <property type="entry name" value="GDHRDH"/>
</dbReference>
<dbReference type="PRINTS" id="PR00080">
    <property type="entry name" value="SDRFAMILY"/>
</dbReference>
<dbReference type="SMART" id="SM00822">
    <property type="entry name" value="PKS_KR"/>
    <property type="match status" value="1"/>
</dbReference>
<dbReference type="SUPFAM" id="SSF51735">
    <property type="entry name" value="NAD(P)-binding Rossmann-fold domains"/>
    <property type="match status" value="1"/>
</dbReference>
<proteinExistence type="inferred from homology"/>
<feature type="chain" id="PRO_0000428322" description="Uncharacterized oxidoreductase MT1753.1">
    <location>
        <begin position="1"/>
        <end position="270"/>
    </location>
</feature>
<feature type="active site" description="Proton acceptor" evidence="1">
    <location>
        <position position="171"/>
    </location>
</feature>
<feature type="binding site" evidence="1">
    <location>
        <begin position="30"/>
        <end position="55"/>
    </location>
    <ligand>
        <name>NADP(+)</name>
        <dbReference type="ChEBI" id="CHEBI:58349"/>
    </ligand>
</feature>
<feature type="binding site" evidence="1">
    <location>
        <position position="157"/>
    </location>
    <ligand>
        <name>substrate</name>
    </ligand>
</feature>
<comment type="similarity">
    <text evidence="2">Belongs to the short-chain dehydrogenases/reductases (SDR) family.</text>
</comment>
<protein>
    <recommendedName>
        <fullName>Uncharacterized oxidoreductase MT1753.1</fullName>
        <ecNumber>1.-.-.-</ecNumber>
    </recommendedName>
</protein>